<name>ITAL_MOUSE</name>
<organism>
    <name type="scientific">Mus musculus</name>
    <name type="common">Mouse</name>
    <dbReference type="NCBI Taxonomy" id="10090"/>
    <lineage>
        <taxon>Eukaryota</taxon>
        <taxon>Metazoa</taxon>
        <taxon>Chordata</taxon>
        <taxon>Craniata</taxon>
        <taxon>Vertebrata</taxon>
        <taxon>Euteleostomi</taxon>
        <taxon>Mammalia</taxon>
        <taxon>Eutheria</taxon>
        <taxon>Euarchontoglires</taxon>
        <taxon>Glires</taxon>
        <taxon>Rodentia</taxon>
        <taxon>Myomorpha</taxon>
        <taxon>Muroidea</taxon>
        <taxon>Muridae</taxon>
        <taxon>Murinae</taxon>
        <taxon>Mus</taxon>
        <taxon>Mus</taxon>
    </lineage>
</organism>
<evidence type="ECO:0000250" key="1"/>
<evidence type="ECO:0000250" key="2">
    <source>
        <dbReference type="UniProtKB" id="P08648"/>
    </source>
</evidence>
<evidence type="ECO:0000250" key="3">
    <source>
        <dbReference type="UniProtKB" id="P20701"/>
    </source>
</evidence>
<evidence type="ECO:0000255" key="4"/>
<evidence type="ECO:0000255" key="5">
    <source>
        <dbReference type="PROSITE-ProRule" id="PRU00219"/>
    </source>
</evidence>
<evidence type="ECO:0000255" key="6">
    <source>
        <dbReference type="PROSITE-ProRule" id="PRU00803"/>
    </source>
</evidence>
<evidence type="ECO:0000256" key="7">
    <source>
        <dbReference type="SAM" id="MobiDB-lite"/>
    </source>
</evidence>
<evidence type="ECO:0000269" key="8">
    <source>
    </source>
</evidence>
<evidence type="ECO:0000269" key="9">
    <source>
    </source>
</evidence>
<evidence type="ECO:0000269" key="10">
    <source>
    </source>
</evidence>
<evidence type="ECO:0000269" key="11">
    <source>
    </source>
</evidence>
<evidence type="ECO:0000269" key="12">
    <source>
    </source>
</evidence>
<evidence type="ECO:0000269" key="13">
    <source>
    </source>
</evidence>
<evidence type="ECO:0000305" key="14"/>
<evidence type="ECO:0000312" key="15">
    <source>
        <dbReference type="MGI" id="MGI:96606"/>
    </source>
</evidence>
<comment type="function">
    <text evidence="3 8 9 10 11 12">Integrin ITGAL/ITGB2 is a receptor for ICAM1, ICAM2, ICAM3 and ICAM4 (PubMed:2051027). Integrin ITGAL/ITGB2 is a receptor for F11R (By similarity). Integrin ITGAL/ITGB2 is a receptor for the secreted form of ubiquitin-like protein ISG15; the interaction is mediated by ITGAL (PubMed:29100055). Involved in a variety of immune phenomena including leukocyte-endothelial cell interaction, cytotoxic T-cell mediated killing, and antibody dependent killing by granulocytes and monocytes. Contributes to natural killer cell cytotoxicity. Involved in leukocyte adhesion and transmigration of leukocytes including T-cells and neutrophils (PubMed:16234355, PubMed:24158516). Acts as a platform at the immunological synapse to translate TCR engagement and density of the ITGAL ligand ICAM1 into graded adhesion (By similarity). Required for generation of common lymphoid progenitor cells in bone marrow, indicating the role in lymphopoiesis (PubMed:25108025). Integrin ITGAL/ITGB2 in association with ICAM3, contributes to apoptotic neutrophil phagocytosis by macrophages.</text>
</comment>
<comment type="subunit">
    <text evidence="3">Heterodimer of an alpha and a beta subunit. The ITGAL alpha subunit associates with the ITGB2 beta subunit. Interacts with THBD. Interacts with CD226.</text>
</comment>
<comment type="subcellular location">
    <subcellularLocation>
        <location evidence="3">Cell membrane</location>
        <topology evidence="4">Single-pass type I membrane protein</topology>
    </subcellularLocation>
    <text evidence="3">Upon antigen recognition by the TCR, is recruited to lipid rafts.</text>
</comment>
<comment type="alternative products">
    <event type="alternative splicing"/>
    <isoform>
        <id>P24063-1</id>
        <name>1</name>
        <sequence type="displayed"/>
    </isoform>
    <isoform>
        <id>P24063-2</id>
        <name>2</name>
        <sequence type="described" ref="VSP_061239"/>
    </isoform>
</comment>
<comment type="tissue specificity">
    <text evidence="10 11">Leukocytes.</text>
</comment>
<comment type="domain">
    <text evidence="3">The integrin I-domain (insert) is a VWFA domain. Integrins with I-domains do not undergo protease cleavage. The I-domain is necessary and sufficient for interaction with ICAM1 and F11R.</text>
</comment>
<comment type="PTM">
    <text evidence="3">In resting T-cells, up to 40% of surface ITGAL is constitutively phosphorylated. Phosphorylation causes conformational changes needed for ligand binding and is necessary for the activation by some physiological agents.</text>
</comment>
<comment type="disruption phenotype">
    <text evidence="10 11 12">Mice show decreased cellularity in thymus but not spleen, and impaired early T cell development (PubMed:25108025). Obese mutant mice show decreased total number of T-cells, lower levels of neutrophil elastase and reduced cytotoxic T-cell proliferation in adipose tissue, as well as improved glucose tolerance and insulin resistance in comparison to obese wild type mice (PubMed:24158516). Splenocytes from mutant mice do not respond to extracellular Isg15 as demonstrated by lack of Ifng secretion in contrast to wild-type cells which secrete Ifng in response to treatment with Isg15 (PubMed:29100055).</text>
</comment>
<comment type="similarity">
    <text evidence="14">Belongs to the integrin alpha chain family.</text>
</comment>
<comment type="sequence caution" evidence="14">
    <conflict type="frameshift">
        <sequence resource="EMBL-CDS" id="AAA39426"/>
    </conflict>
</comment>
<feature type="signal peptide" evidence="13">
    <location>
        <begin position="1"/>
        <end position="23"/>
    </location>
</feature>
<feature type="chain" id="PRO_0000016293" description="Integrin alpha-L">
    <location>
        <begin position="24"/>
        <end position="1162"/>
    </location>
</feature>
<feature type="topological domain" description="Extracellular" evidence="4">
    <location>
        <begin position="24"/>
        <end position="1088"/>
    </location>
</feature>
<feature type="transmembrane region" description="Helical" evidence="4">
    <location>
        <begin position="1089"/>
        <end position="1109"/>
    </location>
</feature>
<feature type="topological domain" description="Cytoplasmic" evidence="4">
    <location>
        <begin position="1110"/>
        <end position="1162"/>
    </location>
</feature>
<feature type="repeat" description="FG-GAP 1" evidence="6">
    <location>
        <begin position="28"/>
        <end position="79"/>
    </location>
</feature>
<feature type="repeat" description="FG-GAP 2" evidence="6">
    <location>
        <begin position="80"/>
        <end position="138"/>
    </location>
</feature>
<feature type="domain" description="VWFA" evidence="5">
    <location>
        <begin position="153"/>
        <end position="325"/>
    </location>
</feature>
<feature type="repeat" description="FG-GAP 3" evidence="6">
    <location>
        <begin position="336"/>
        <end position="387"/>
    </location>
</feature>
<feature type="repeat" description="FG-GAP 4" evidence="6">
    <location>
        <begin position="390"/>
        <end position="443"/>
    </location>
</feature>
<feature type="repeat" description="FG-GAP 5" evidence="6">
    <location>
        <begin position="444"/>
        <end position="504"/>
    </location>
</feature>
<feature type="repeat" description="FG-GAP 6" evidence="6">
    <location>
        <begin position="505"/>
        <end position="561"/>
    </location>
</feature>
<feature type="repeat" description="FG-GAP 7" evidence="6">
    <location>
        <begin position="565"/>
        <end position="625"/>
    </location>
</feature>
<feature type="region of interest" description="Disordered" evidence="7">
    <location>
        <begin position="1124"/>
        <end position="1162"/>
    </location>
</feature>
<feature type="short sequence motif" description="GFFKR motif">
    <location>
        <begin position="1112"/>
        <end position="1116"/>
    </location>
</feature>
<feature type="compositionally biased region" description="Basic and acidic residues" evidence="7">
    <location>
        <begin position="1145"/>
        <end position="1162"/>
    </location>
</feature>
<feature type="binding site" evidence="2">
    <location>
        <position position="466"/>
    </location>
    <ligand>
        <name>Ca(2+)</name>
        <dbReference type="ChEBI" id="CHEBI:29108"/>
        <label>1</label>
    </ligand>
</feature>
<feature type="binding site" evidence="2">
    <location>
        <position position="468"/>
    </location>
    <ligand>
        <name>Ca(2+)</name>
        <dbReference type="ChEBI" id="CHEBI:29108"/>
        <label>1</label>
    </ligand>
</feature>
<feature type="binding site" evidence="2">
    <location>
        <position position="470"/>
    </location>
    <ligand>
        <name>Ca(2+)</name>
        <dbReference type="ChEBI" id="CHEBI:29108"/>
        <label>1</label>
    </ligand>
</feature>
<feature type="binding site" evidence="2">
    <location>
        <position position="474"/>
    </location>
    <ligand>
        <name>Ca(2+)</name>
        <dbReference type="ChEBI" id="CHEBI:29108"/>
        <label>1</label>
    </ligand>
</feature>
<feature type="binding site" evidence="2">
    <location>
        <position position="528"/>
    </location>
    <ligand>
        <name>Ca(2+)</name>
        <dbReference type="ChEBI" id="CHEBI:29108"/>
        <label>2</label>
    </ligand>
</feature>
<feature type="binding site" evidence="2">
    <location>
        <position position="530"/>
    </location>
    <ligand>
        <name>Ca(2+)</name>
        <dbReference type="ChEBI" id="CHEBI:29108"/>
        <label>2</label>
    </ligand>
</feature>
<feature type="binding site" evidence="2">
    <location>
        <position position="532"/>
    </location>
    <ligand>
        <name>Ca(2+)</name>
        <dbReference type="ChEBI" id="CHEBI:29108"/>
        <label>2</label>
    </ligand>
</feature>
<feature type="binding site" evidence="2">
    <location>
        <position position="536"/>
    </location>
    <ligand>
        <name>Ca(2+)</name>
        <dbReference type="ChEBI" id="CHEBI:29108"/>
        <label>2</label>
    </ligand>
</feature>
<feature type="binding site" evidence="2">
    <location>
        <position position="588"/>
    </location>
    <ligand>
        <name>Ca(2+)</name>
        <dbReference type="ChEBI" id="CHEBI:29108"/>
        <label>3</label>
    </ligand>
</feature>
<feature type="binding site" evidence="2">
    <location>
        <position position="592"/>
    </location>
    <ligand>
        <name>Ca(2+)</name>
        <dbReference type="ChEBI" id="CHEBI:29108"/>
        <label>3</label>
    </ligand>
</feature>
<feature type="binding site" evidence="2">
    <location>
        <position position="596"/>
    </location>
    <ligand>
        <name>Ca(2+)</name>
        <dbReference type="ChEBI" id="CHEBI:29108"/>
        <label>3</label>
    </ligand>
</feature>
<feature type="glycosylation site" description="N-linked (GlcNAc...) asparagine" evidence="4">
    <location>
        <position position="86"/>
    </location>
</feature>
<feature type="glycosylation site" description="N-linked (GlcNAc...) asparagine" evidence="4">
    <location>
        <position position="185"/>
    </location>
</feature>
<feature type="glycosylation site" description="N-linked (GlcNAc...) asparagine" evidence="4">
    <location>
        <position position="270"/>
    </location>
</feature>
<feature type="glycosylation site" description="N-linked (GlcNAc...) asparagine" evidence="4">
    <location>
        <position position="444"/>
    </location>
</feature>
<feature type="glycosylation site" description="N-linked (GlcNAc...) asparagine" evidence="4">
    <location>
        <position position="668"/>
    </location>
</feature>
<feature type="glycosylation site" description="N-linked (GlcNAc...) asparagine" evidence="4">
    <location>
        <position position="696"/>
    </location>
</feature>
<feature type="glycosylation site" description="N-linked (GlcNAc...) asparagine" evidence="4">
    <location>
        <position position="724"/>
    </location>
</feature>
<feature type="glycosylation site" description="N-linked (GlcNAc...) asparagine" evidence="4">
    <location>
        <position position="728"/>
    </location>
</feature>
<feature type="glycosylation site" description="N-linked (GlcNAc...) asparagine" evidence="4">
    <location>
        <position position="777"/>
    </location>
</feature>
<feature type="glycosylation site" description="N-linked (GlcNAc...) asparagine" evidence="4">
    <location>
        <position position="858"/>
    </location>
</feature>
<feature type="glycosylation site" description="N-linked (GlcNAc...) asparagine" evidence="4">
    <location>
        <position position="881"/>
    </location>
</feature>
<feature type="glycosylation site" description="N-linked (GlcNAc...) asparagine" evidence="4">
    <location>
        <position position="891"/>
    </location>
</feature>
<feature type="glycosylation site" description="N-linked (GlcNAc...) asparagine" evidence="4">
    <location>
        <position position="900"/>
    </location>
</feature>
<feature type="glycosylation site" description="N-linked (GlcNAc...) asparagine" evidence="4">
    <location>
        <position position="928"/>
    </location>
</feature>
<feature type="glycosylation site" description="N-linked (GlcNAc...) asparagine" evidence="4">
    <location>
        <position position="1057"/>
    </location>
</feature>
<feature type="disulfide bond" evidence="1">
    <location>
        <begin position="70"/>
        <end position="77"/>
    </location>
</feature>
<feature type="disulfide bond" evidence="1">
    <location>
        <begin position="108"/>
        <end position="126"/>
    </location>
</feature>
<feature type="disulfide bond" evidence="1">
    <location>
        <begin position="147"/>
        <end position="199"/>
    </location>
</feature>
<feature type="disulfide bond" evidence="1">
    <location>
        <begin position="651"/>
        <end position="705"/>
    </location>
</feature>
<feature type="disulfide bond" evidence="1">
    <location>
        <begin position="768"/>
        <end position="774"/>
    </location>
</feature>
<feature type="disulfide bond" evidence="1">
    <location>
        <begin position="841"/>
        <end position="857"/>
    </location>
</feature>
<feature type="disulfide bond" evidence="1">
    <location>
        <begin position="994"/>
        <end position="1010"/>
    </location>
</feature>
<feature type="disulfide bond" evidence="1">
    <location>
        <begin position="1018"/>
        <end position="1049"/>
    </location>
</feature>
<feature type="splice variant" id="VSP_061239" description="In isoform 2.">
    <location>
        <position position="743"/>
    </location>
</feature>
<feature type="sequence conflict" description="In Ref. 1; AAA39426, 2; BAE33641 and 4; AAI45803." evidence="14" ref="1 2 4">
    <original>W</original>
    <variation>R</variation>
    <location>
        <position position="973"/>
    </location>
</feature>
<feature type="sequence conflict" description="In Ref. 1; AAA39426, 2; BAE33641 and 4; AAI45803." evidence="14" ref="1 2 4">
    <original>P</original>
    <variation>L</variation>
    <location>
        <position position="979"/>
    </location>
</feature>
<feature type="sequence conflict" description="In Ref. 1; AAA39426." evidence="14" ref="1">
    <original>R</original>
    <variation>W</variation>
    <location>
        <position position="1024"/>
    </location>
</feature>
<reference key="1">
    <citation type="journal article" date="1991" name="J. Immunol.">
        <title>Cloning of the murine lymphocyte function-associated molecule-1 alpha-subunit and its expression in COS cells.</title>
        <authorList>
            <person name="Kaufmann Y."/>
            <person name="Tseng E."/>
            <person name="Springer T.A."/>
        </authorList>
    </citation>
    <scope>NUCLEOTIDE SEQUENCE [MRNA] (ISOFORM 2)</scope>
    <scope>FUNCTION</scope>
</reference>
<reference key="2">
    <citation type="journal article" date="2005" name="Science">
        <title>The transcriptional landscape of the mammalian genome.</title>
        <authorList>
            <person name="Carninci P."/>
            <person name="Kasukawa T."/>
            <person name="Katayama S."/>
            <person name="Gough J."/>
            <person name="Frith M.C."/>
            <person name="Maeda N."/>
            <person name="Oyama R."/>
            <person name="Ravasi T."/>
            <person name="Lenhard B."/>
            <person name="Wells C."/>
            <person name="Kodzius R."/>
            <person name="Shimokawa K."/>
            <person name="Bajic V.B."/>
            <person name="Brenner S.E."/>
            <person name="Batalov S."/>
            <person name="Forrest A.R."/>
            <person name="Zavolan M."/>
            <person name="Davis M.J."/>
            <person name="Wilming L.G."/>
            <person name="Aidinis V."/>
            <person name="Allen J.E."/>
            <person name="Ambesi-Impiombato A."/>
            <person name="Apweiler R."/>
            <person name="Aturaliya R.N."/>
            <person name="Bailey T.L."/>
            <person name="Bansal M."/>
            <person name="Baxter L."/>
            <person name="Beisel K.W."/>
            <person name="Bersano T."/>
            <person name="Bono H."/>
            <person name="Chalk A.M."/>
            <person name="Chiu K.P."/>
            <person name="Choudhary V."/>
            <person name="Christoffels A."/>
            <person name="Clutterbuck D.R."/>
            <person name="Crowe M.L."/>
            <person name="Dalla E."/>
            <person name="Dalrymple B.P."/>
            <person name="de Bono B."/>
            <person name="Della Gatta G."/>
            <person name="di Bernardo D."/>
            <person name="Down T."/>
            <person name="Engstrom P."/>
            <person name="Fagiolini M."/>
            <person name="Faulkner G."/>
            <person name="Fletcher C.F."/>
            <person name="Fukushima T."/>
            <person name="Furuno M."/>
            <person name="Futaki S."/>
            <person name="Gariboldi M."/>
            <person name="Georgii-Hemming P."/>
            <person name="Gingeras T.R."/>
            <person name="Gojobori T."/>
            <person name="Green R.E."/>
            <person name="Gustincich S."/>
            <person name="Harbers M."/>
            <person name="Hayashi Y."/>
            <person name="Hensch T.K."/>
            <person name="Hirokawa N."/>
            <person name="Hill D."/>
            <person name="Huminiecki L."/>
            <person name="Iacono M."/>
            <person name="Ikeo K."/>
            <person name="Iwama A."/>
            <person name="Ishikawa T."/>
            <person name="Jakt M."/>
            <person name="Kanapin A."/>
            <person name="Katoh M."/>
            <person name="Kawasawa Y."/>
            <person name="Kelso J."/>
            <person name="Kitamura H."/>
            <person name="Kitano H."/>
            <person name="Kollias G."/>
            <person name="Krishnan S.P."/>
            <person name="Kruger A."/>
            <person name="Kummerfeld S.K."/>
            <person name="Kurochkin I.V."/>
            <person name="Lareau L.F."/>
            <person name="Lazarevic D."/>
            <person name="Lipovich L."/>
            <person name="Liu J."/>
            <person name="Liuni S."/>
            <person name="McWilliam S."/>
            <person name="Madan Babu M."/>
            <person name="Madera M."/>
            <person name="Marchionni L."/>
            <person name="Matsuda H."/>
            <person name="Matsuzawa S."/>
            <person name="Miki H."/>
            <person name="Mignone F."/>
            <person name="Miyake S."/>
            <person name="Morris K."/>
            <person name="Mottagui-Tabar S."/>
            <person name="Mulder N."/>
            <person name="Nakano N."/>
            <person name="Nakauchi H."/>
            <person name="Ng P."/>
            <person name="Nilsson R."/>
            <person name="Nishiguchi S."/>
            <person name="Nishikawa S."/>
            <person name="Nori F."/>
            <person name="Ohara O."/>
            <person name="Okazaki Y."/>
            <person name="Orlando V."/>
            <person name="Pang K.C."/>
            <person name="Pavan W.J."/>
            <person name="Pavesi G."/>
            <person name="Pesole G."/>
            <person name="Petrovsky N."/>
            <person name="Piazza S."/>
            <person name="Reed J."/>
            <person name="Reid J.F."/>
            <person name="Ring B.Z."/>
            <person name="Ringwald M."/>
            <person name="Rost B."/>
            <person name="Ruan Y."/>
            <person name="Salzberg S.L."/>
            <person name="Sandelin A."/>
            <person name="Schneider C."/>
            <person name="Schoenbach C."/>
            <person name="Sekiguchi K."/>
            <person name="Semple C.A."/>
            <person name="Seno S."/>
            <person name="Sessa L."/>
            <person name="Sheng Y."/>
            <person name="Shibata Y."/>
            <person name="Shimada H."/>
            <person name="Shimada K."/>
            <person name="Silva D."/>
            <person name="Sinclair B."/>
            <person name="Sperling S."/>
            <person name="Stupka E."/>
            <person name="Sugiura K."/>
            <person name="Sultana R."/>
            <person name="Takenaka Y."/>
            <person name="Taki K."/>
            <person name="Tammoja K."/>
            <person name="Tan S.L."/>
            <person name="Tang S."/>
            <person name="Taylor M.S."/>
            <person name="Tegner J."/>
            <person name="Teichmann S.A."/>
            <person name="Ueda H.R."/>
            <person name="van Nimwegen E."/>
            <person name="Verardo R."/>
            <person name="Wei C.L."/>
            <person name="Yagi K."/>
            <person name="Yamanishi H."/>
            <person name="Zabarovsky E."/>
            <person name="Zhu S."/>
            <person name="Zimmer A."/>
            <person name="Hide W."/>
            <person name="Bult C."/>
            <person name="Grimmond S.M."/>
            <person name="Teasdale R.D."/>
            <person name="Liu E.T."/>
            <person name="Brusic V."/>
            <person name="Quackenbush J."/>
            <person name="Wahlestedt C."/>
            <person name="Mattick J.S."/>
            <person name="Hume D.A."/>
            <person name="Kai C."/>
            <person name="Sasaki D."/>
            <person name="Tomaru Y."/>
            <person name="Fukuda S."/>
            <person name="Kanamori-Katayama M."/>
            <person name="Suzuki M."/>
            <person name="Aoki J."/>
            <person name="Arakawa T."/>
            <person name="Iida J."/>
            <person name="Imamura K."/>
            <person name="Itoh M."/>
            <person name="Kato T."/>
            <person name="Kawaji H."/>
            <person name="Kawagashira N."/>
            <person name="Kawashima T."/>
            <person name="Kojima M."/>
            <person name="Kondo S."/>
            <person name="Konno H."/>
            <person name="Nakano K."/>
            <person name="Ninomiya N."/>
            <person name="Nishio T."/>
            <person name="Okada M."/>
            <person name="Plessy C."/>
            <person name="Shibata K."/>
            <person name="Shiraki T."/>
            <person name="Suzuki S."/>
            <person name="Tagami M."/>
            <person name="Waki K."/>
            <person name="Watahiki A."/>
            <person name="Okamura-Oho Y."/>
            <person name="Suzuki H."/>
            <person name="Kawai J."/>
            <person name="Hayashizaki Y."/>
        </authorList>
    </citation>
    <scope>NUCLEOTIDE SEQUENCE [LARGE SCALE MRNA] (ISOFORM 1)</scope>
    <source>
        <strain>NOD</strain>
        <tissue>Spleen</tissue>
    </source>
</reference>
<reference key="3">
    <citation type="journal article" date="2009" name="PLoS Biol.">
        <title>Lineage-specific biology revealed by a finished genome assembly of the mouse.</title>
        <authorList>
            <person name="Church D.M."/>
            <person name="Goodstadt L."/>
            <person name="Hillier L.W."/>
            <person name="Zody M.C."/>
            <person name="Goldstein S."/>
            <person name="She X."/>
            <person name="Bult C.J."/>
            <person name="Agarwala R."/>
            <person name="Cherry J.L."/>
            <person name="DiCuccio M."/>
            <person name="Hlavina W."/>
            <person name="Kapustin Y."/>
            <person name="Meric P."/>
            <person name="Maglott D."/>
            <person name="Birtle Z."/>
            <person name="Marques A.C."/>
            <person name="Graves T."/>
            <person name="Zhou S."/>
            <person name="Teague B."/>
            <person name="Potamousis K."/>
            <person name="Churas C."/>
            <person name="Place M."/>
            <person name="Herschleb J."/>
            <person name="Runnheim R."/>
            <person name="Forrest D."/>
            <person name="Amos-Landgraf J."/>
            <person name="Schwartz D.C."/>
            <person name="Cheng Z."/>
            <person name="Lindblad-Toh K."/>
            <person name="Eichler E.E."/>
            <person name="Ponting C.P."/>
        </authorList>
    </citation>
    <scope>NUCLEOTIDE SEQUENCE [LARGE SCALE GENOMIC DNA]</scope>
    <source>
        <strain>C57BL/6J</strain>
    </source>
</reference>
<reference key="4">
    <citation type="journal article" date="2004" name="Genome Res.">
        <title>The status, quality, and expansion of the NIH full-length cDNA project: the Mammalian Gene Collection (MGC).</title>
        <authorList>
            <consortium name="The MGC Project Team"/>
        </authorList>
    </citation>
    <scope>NUCLEOTIDE SEQUENCE [LARGE SCALE MRNA] (ISOFORM 1)</scope>
    <source>
        <tissue>Brain</tissue>
    </source>
</reference>
<reference key="5">
    <citation type="journal article" date="1985" name="Nature">
        <title>Sequence homology of the LFA-1 and Mac-1 leukocyte adhesion glycoproteins and unexpected relation to leukocyte interferon.</title>
        <authorList>
            <person name="Springer T.A."/>
            <person name="Teplow D.B."/>
            <person name="Dreyer W.J."/>
        </authorList>
    </citation>
    <scope>PROTEIN SEQUENCE OF 24-42</scope>
</reference>
<reference key="6">
    <citation type="journal article" date="2006" name="Blood">
        <title>Differential roles for beta2 integrins in experimental autoimmune bullous pemphigoid.</title>
        <authorList>
            <person name="Liu Z."/>
            <person name="Zhao M."/>
            <person name="Li N."/>
            <person name="Diaz L.A."/>
            <person name="Mayadas T.N."/>
        </authorList>
    </citation>
    <scope>FUNCTION</scope>
</reference>
<reference key="7">
    <citation type="journal article" date="2010" name="Cell">
        <title>A tissue-specific atlas of mouse protein phosphorylation and expression.</title>
        <authorList>
            <person name="Huttlin E.L."/>
            <person name="Jedrychowski M.P."/>
            <person name="Elias J.E."/>
            <person name="Goswami T."/>
            <person name="Rad R."/>
            <person name="Beausoleil S.A."/>
            <person name="Villen J."/>
            <person name="Haas W."/>
            <person name="Sowa M.E."/>
            <person name="Gygi S.P."/>
        </authorList>
    </citation>
    <scope>IDENTIFICATION BY MASS SPECTROMETRY [LARGE SCALE ANALYSIS]</scope>
    <source>
        <tissue>Liver</tissue>
        <tissue>Lung</tissue>
        <tissue>Spleen</tissue>
    </source>
</reference>
<reference key="8">
    <citation type="journal article" date="2014" name="Arterioscler. Thromb. Vasc. Biol.">
        <title>Essential role of CD11a in CD8+ T-cell accumulation and activation in adipose tissue.</title>
        <authorList>
            <person name="Jiang E."/>
            <person name="Perrard X.D."/>
            <person name="Yang D."/>
            <person name="Khan I.M."/>
            <person name="Perrard J.L."/>
            <person name="Smith C.W."/>
            <person name="Ballantyne C.M."/>
            <person name="Wu H."/>
        </authorList>
    </citation>
    <scope>FUNCTION</scope>
    <scope>TISSUE SPECIFICITY</scope>
    <scope>DISRUPTION PHENOTYPE</scope>
</reference>
<reference key="9">
    <citation type="journal article" date="2014" name="J. Immunol.">
        <title>CD11a is essential for normal development of hematopoietic intermediates.</title>
        <authorList>
            <person name="Bose T.O."/>
            <person name="Colpitts S.L."/>
            <person name="Pham Q.M."/>
            <person name="Puddington L."/>
            <person name="Lefrancois L."/>
        </authorList>
    </citation>
    <scope>FUNCTION</scope>
    <scope>TISSUE SPECIFICITY</scope>
    <scope>DISRUPTION PHENOTYPE</scope>
</reference>
<reference key="10">
    <citation type="journal article" date="2017" name="Mol. Cell">
        <title>Extracellular ISG15 signals cytokine secretion through the LFA-1 integrin receptor.</title>
        <authorList>
            <person name="Swaim C.D."/>
            <person name="Scott A.F."/>
            <person name="Canadeo L.A."/>
            <person name="Huibregtse J.M."/>
        </authorList>
    </citation>
    <scope>FUNCTION</scope>
    <scope>DISRUPTION PHENOTYPE</scope>
</reference>
<accession>P24063</accession>
<accession>E9Q5M7</accession>
<accession>E9QNL8</accession>
<accession>Q3U159</accession>
<gene>
    <name evidence="15" type="primary">Itgal</name>
    <name type="synonym">Lfa-1</name>
    <name type="synonym">Ly-15</name>
</gene>
<proteinExistence type="evidence at protein level"/>
<dbReference type="EMBL" id="M60778">
    <property type="protein sequence ID" value="AAA39426.1"/>
    <property type="status" value="ALT_FRAME"/>
    <property type="molecule type" value="mRNA"/>
</dbReference>
<dbReference type="EMBL" id="AK156251">
    <property type="protein sequence ID" value="BAE33641.1"/>
    <property type="molecule type" value="mRNA"/>
</dbReference>
<dbReference type="EMBL" id="AC133494">
    <property type="status" value="NOT_ANNOTATED_CDS"/>
    <property type="molecule type" value="Genomic_DNA"/>
</dbReference>
<dbReference type="EMBL" id="BC145802">
    <property type="protein sequence ID" value="AAI45803.1"/>
    <property type="molecule type" value="mRNA"/>
</dbReference>
<dbReference type="CCDS" id="CCDS57588.1">
    <molecule id="P24063-2"/>
</dbReference>
<dbReference type="CCDS" id="CCDS57589.1">
    <molecule id="P24063-1"/>
</dbReference>
<dbReference type="PIR" id="I56126">
    <property type="entry name" value="I56126"/>
</dbReference>
<dbReference type="RefSeq" id="NP_001240801.1">
    <molecule id="P24063-1"/>
    <property type="nucleotide sequence ID" value="NM_001253872.1"/>
</dbReference>
<dbReference type="RefSeq" id="NP_001240802.1">
    <molecule id="P24063-2"/>
    <property type="nucleotide sequence ID" value="NM_001253873.1"/>
</dbReference>
<dbReference type="SMR" id="P24063"/>
<dbReference type="ComplexPortal" id="CPX-3128">
    <property type="entry name" value="Integrin alphaL-beta2 complex"/>
</dbReference>
<dbReference type="DIP" id="DIP-35643N"/>
<dbReference type="FunCoup" id="P24063">
    <property type="interactions" value="753"/>
</dbReference>
<dbReference type="IntAct" id="P24063">
    <property type="interactions" value="4"/>
</dbReference>
<dbReference type="STRING" id="10090.ENSMUSP00000101913"/>
<dbReference type="BindingDB" id="P24063"/>
<dbReference type="ChEMBL" id="CHEMBL1075188"/>
<dbReference type="GlyCosmos" id="P24063">
    <property type="glycosylation" value="15 sites, No reported glycans"/>
</dbReference>
<dbReference type="GlyGen" id="P24063">
    <property type="glycosylation" value="17 sites, 3 N-linked glycans (3 sites), 1 O-linked glycan (1 site)"/>
</dbReference>
<dbReference type="iPTMnet" id="P24063"/>
<dbReference type="PhosphoSitePlus" id="P24063"/>
<dbReference type="SwissPalm" id="P24063"/>
<dbReference type="PaxDb" id="10090-ENSMUSP00000101913"/>
<dbReference type="ProteomicsDB" id="301689"/>
<dbReference type="ProteomicsDB" id="312541"/>
<dbReference type="ProteomicsDB" id="355028"/>
<dbReference type="Antibodypedia" id="13698">
    <property type="antibodies" value="2235 antibodies from 47 providers"/>
</dbReference>
<dbReference type="DNASU" id="16408"/>
<dbReference type="Ensembl" id="ENSMUST00000106306.9">
    <molecule id="P24063-1"/>
    <property type="protein sequence ID" value="ENSMUSP00000101913.3"/>
    <property type="gene ID" value="ENSMUSG00000030830.20"/>
</dbReference>
<dbReference type="Ensembl" id="ENSMUST00000117762.8">
    <molecule id="P24063-2"/>
    <property type="protein sequence ID" value="ENSMUSP00000113946.2"/>
    <property type="gene ID" value="ENSMUSG00000030830.20"/>
</dbReference>
<dbReference type="GeneID" id="16408"/>
<dbReference type="KEGG" id="mmu:16408"/>
<dbReference type="AGR" id="MGI:96606"/>
<dbReference type="CTD" id="3683"/>
<dbReference type="MGI" id="MGI:96606">
    <property type="gene designation" value="Itgal"/>
</dbReference>
<dbReference type="VEuPathDB" id="HostDB:ENSMUSG00000030830"/>
<dbReference type="eggNOG" id="KOG3637">
    <property type="taxonomic scope" value="Eukaryota"/>
</dbReference>
<dbReference type="GeneTree" id="ENSGT00940000161495"/>
<dbReference type="HOGENOM" id="CLU_004111_3_0_1"/>
<dbReference type="InParanoid" id="P24063"/>
<dbReference type="OMA" id="TVCFQLK"/>
<dbReference type="OrthoDB" id="60033at9989"/>
<dbReference type="TreeFam" id="TF105391"/>
<dbReference type="Reactome" id="R-MMU-198933">
    <property type="pathway name" value="Immunoregulatory interactions between a Lymphoid and a non-Lymphoid cell"/>
</dbReference>
<dbReference type="Reactome" id="R-MMU-202733">
    <property type="pathway name" value="Cell surface interactions at the vascular wall"/>
</dbReference>
<dbReference type="Reactome" id="R-MMU-216083">
    <property type="pathway name" value="Integrin cell surface interactions"/>
</dbReference>
<dbReference type="Reactome" id="R-MMU-6798695">
    <property type="pathway name" value="Neutrophil degranulation"/>
</dbReference>
<dbReference type="BioGRID-ORCS" id="16408">
    <property type="hits" value="2 hits in 79 CRISPR screens"/>
</dbReference>
<dbReference type="ChiTaRS" id="Itgal">
    <property type="organism name" value="mouse"/>
</dbReference>
<dbReference type="PRO" id="PR:P24063"/>
<dbReference type="Proteomes" id="UP000000589">
    <property type="component" value="Chromosome 7"/>
</dbReference>
<dbReference type="RNAct" id="P24063">
    <property type="molecule type" value="protein"/>
</dbReference>
<dbReference type="Bgee" id="ENSMUSG00000030830">
    <property type="expression patterns" value="Expressed in granulocyte and 82 other cell types or tissues"/>
</dbReference>
<dbReference type="ExpressionAtlas" id="P24063">
    <property type="expression patterns" value="baseline and differential"/>
</dbReference>
<dbReference type="GO" id="GO:0005911">
    <property type="term" value="C:cell-cell junction"/>
    <property type="evidence" value="ECO:0000314"/>
    <property type="project" value="MGI"/>
</dbReference>
<dbReference type="GO" id="GO:0009897">
    <property type="term" value="C:external side of plasma membrane"/>
    <property type="evidence" value="ECO:0000314"/>
    <property type="project" value="MGI"/>
</dbReference>
<dbReference type="GO" id="GO:0001772">
    <property type="term" value="C:immunological synapse"/>
    <property type="evidence" value="ECO:0000314"/>
    <property type="project" value="MGI"/>
</dbReference>
<dbReference type="GO" id="GO:0008305">
    <property type="term" value="C:integrin complex"/>
    <property type="evidence" value="ECO:0007669"/>
    <property type="project" value="InterPro"/>
</dbReference>
<dbReference type="GO" id="GO:0046872">
    <property type="term" value="F:metal ion binding"/>
    <property type="evidence" value="ECO:0007669"/>
    <property type="project" value="UniProtKB-KW"/>
</dbReference>
<dbReference type="GO" id="GO:0050798">
    <property type="term" value="P:activated T cell proliferation"/>
    <property type="evidence" value="ECO:0000315"/>
    <property type="project" value="MGI"/>
</dbReference>
<dbReference type="GO" id="GO:0019722">
    <property type="term" value="P:calcium-mediated signaling"/>
    <property type="evidence" value="ECO:0000314"/>
    <property type="project" value="MGI"/>
</dbReference>
<dbReference type="GO" id="GO:0007166">
    <property type="term" value="P:cell surface receptor signaling pathway"/>
    <property type="evidence" value="ECO:0000314"/>
    <property type="project" value="MGI"/>
</dbReference>
<dbReference type="GO" id="GO:0098609">
    <property type="term" value="P:cell-cell adhesion"/>
    <property type="evidence" value="ECO:0000316"/>
    <property type="project" value="BHF-UCL"/>
</dbReference>
<dbReference type="GO" id="GO:0007229">
    <property type="term" value="P:integrin-mediated signaling pathway"/>
    <property type="evidence" value="ECO:0007669"/>
    <property type="project" value="UniProtKB-KW"/>
</dbReference>
<dbReference type="GO" id="GO:0007159">
    <property type="term" value="P:leukocyte cell-cell adhesion"/>
    <property type="evidence" value="ECO:0000314"/>
    <property type="project" value="MGI"/>
</dbReference>
<dbReference type="GO" id="GO:0006909">
    <property type="term" value="P:phagocytosis"/>
    <property type="evidence" value="ECO:0007669"/>
    <property type="project" value="UniProtKB-KW"/>
</dbReference>
<dbReference type="GO" id="GO:0050850">
    <property type="term" value="P:positive regulation of calcium-mediated signaling"/>
    <property type="evidence" value="ECO:0000314"/>
    <property type="project" value="MGI"/>
</dbReference>
<dbReference type="GO" id="GO:0022409">
    <property type="term" value="P:positive regulation of cell-cell adhesion"/>
    <property type="evidence" value="ECO:0000315"/>
    <property type="project" value="MGI"/>
</dbReference>
<dbReference type="GO" id="GO:0042102">
    <property type="term" value="P:positive regulation of T cell proliferation"/>
    <property type="evidence" value="ECO:0000315"/>
    <property type="project" value="MGI"/>
</dbReference>
<dbReference type="GO" id="GO:0022407">
    <property type="term" value="P:regulation of cell-cell adhesion"/>
    <property type="evidence" value="ECO:0000314"/>
    <property type="project" value="MGI"/>
</dbReference>
<dbReference type="FunFam" id="2.130.10.130:FF:000009">
    <property type="entry name" value="Alpha L integrin"/>
    <property type="match status" value="1"/>
</dbReference>
<dbReference type="FunFam" id="2.60.40.1510:FF:000018">
    <property type="entry name" value="Alpha L integrin"/>
    <property type="match status" value="1"/>
</dbReference>
<dbReference type="FunFam" id="1.20.5.2120:FF:000001">
    <property type="entry name" value="Integrin alpha L"/>
    <property type="match status" value="1"/>
</dbReference>
<dbReference type="FunFam" id="2.60.40.1530:FF:000008">
    <property type="entry name" value="Integrin subunit alpha L"/>
    <property type="match status" value="1"/>
</dbReference>
<dbReference type="FunFam" id="2.60.40.1460:FF:000001">
    <property type="entry name" value="Integrin, alpha V"/>
    <property type="match status" value="1"/>
</dbReference>
<dbReference type="Gene3D" id="1.20.5.2120">
    <property type="match status" value="1"/>
</dbReference>
<dbReference type="Gene3D" id="1.20.5.930">
    <property type="entry name" value="Bicelle-embedded integrin alpha(iib) transmembrane segment"/>
    <property type="match status" value="1"/>
</dbReference>
<dbReference type="Gene3D" id="2.130.10.130">
    <property type="entry name" value="Integrin alpha, N-terminal"/>
    <property type="match status" value="2"/>
</dbReference>
<dbReference type="Gene3D" id="2.60.40.1460">
    <property type="entry name" value="Integrin domains. Chain A, domain 2"/>
    <property type="match status" value="1"/>
</dbReference>
<dbReference type="Gene3D" id="2.60.40.1510">
    <property type="entry name" value="ntegrin, alpha v. Chain A, domain 3"/>
    <property type="match status" value="1"/>
</dbReference>
<dbReference type="Gene3D" id="2.60.40.1530">
    <property type="entry name" value="ntegrin, alpha v. Chain A, domain 4"/>
    <property type="match status" value="1"/>
</dbReference>
<dbReference type="InterPro" id="IPR013517">
    <property type="entry name" value="FG-GAP"/>
</dbReference>
<dbReference type="InterPro" id="IPR013519">
    <property type="entry name" value="Int_alpha_beta-p"/>
</dbReference>
<dbReference type="InterPro" id="IPR000413">
    <property type="entry name" value="Integrin_alpha"/>
</dbReference>
<dbReference type="InterPro" id="IPR018184">
    <property type="entry name" value="Integrin_alpha_C_CS"/>
</dbReference>
<dbReference type="InterPro" id="IPR013649">
    <property type="entry name" value="Integrin_alpha_Ig-like_1"/>
</dbReference>
<dbReference type="InterPro" id="IPR048285">
    <property type="entry name" value="Integrin_alpha_Ig-like_2"/>
</dbReference>
<dbReference type="InterPro" id="IPR028994">
    <property type="entry name" value="Integrin_alpha_N"/>
</dbReference>
<dbReference type="InterPro" id="IPR032695">
    <property type="entry name" value="Integrin_dom_sf"/>
</dbReference>
<dbReference type="InterPro" id="IPR002035">
    <property type="entry name" value="VWF_A"/>
</dbReference>
<dbReference type="InterPro" id="IPR036465">
    <property type="entry name" value="vWFA_dom_sf"/>
</dbReference>
<dbReference type="PANTHER" id="PTHR23220">
    <property type="entry name" value="INTEGRIN ALPHA"/>
    <property type="match status" value="1"/>
</dbReference>
<dbReference type="PANTHER" id="PTHR23220:SF84">
    <property type="entry name" value="INTEGRIN ALPHA-L"/>
    <property type="match status" value="1"/>
</dbReference>
<dbReference type="Pfam" id="PF01839">
    <property type="entry name" value="FG-GAP"/>
    <property type="match status" value="2"/>
</dbReference>
<dbReference type="Pfam" id="PF08441">
    <property type="entry name" value="Integrin_A_Ig_1"/>
    <property type="match status" value="1"/>
</dbReference>
<dbReference type="Pfam" id="PF20805">
    <property type="entry name" value="Integrin_A_Ig_2"/>
    <property type="match status" value="1"/>
</dbReference>
<dbReference type="Pfam" id="PF00357">
    <property type="entry name" value="Integrin_alpha"/>
    <property type="match status" value="1"/>
</dbReference>
<dbReference type="Pfam" id="PF00092">
    <property type="entry name" value="VWA"/>
    <property type="match status" value="1"/>
</dbReference>
<dbReference type="PRINTS" id="PR01185">
    <property type="entry name" value="INTEGRINA"/>
</dbReference>
<dbReference type="PRINTS" id="PR00453">
    <property type="entry name" value="VWFADOMAIN"/>
</dbReference>
<dbReference type="SMART" id="SM00191">
    <property type="entry name" value="Int_alpha"/>
    <property type="match status" value="5"/>
</dbReference>
<dbReference type="SMART" id="SM00327">
    <property type="entry name" value="VWA"/>
    <property type="match status" value="1"/>
</dbReference>
<dbReference type="SUPFAM" id="SSF69318">
    <property type="entry name" value="Integrin alpha N-terminal domain"/>
    <property type="match status" value="1"/>
</dbReference>
<dbReference type="SUPFAM" id="SSF69179">
    <property type="entry name" value="Integrin domains"/>
    <property type="match status" value="2"/>
</dbReference>
<dbReference type="SUPFAM" id="SSF53300">
    <property type="entry name" value="vWA-like"/>
    <property type="match status" value="1"/>
</dbReference>
<dbReference type="PROSITE" id="PS51470">
    <property type="entry name" value="FG_GAP"/>
    <property type="match status" value="7"/>
</dbReference>
<dbReference type="PROSITE" id="PS00242">
    <property type="entry name" value="INTEGRIN_ALPHA"/>
    <property type="match status" value="1"/>
</dbReference>
<dbReference type="PROSITE" id="PS50234">
    <property type="entry name" value="VWFA"/>
    <property type="match status" value="1"/>
</dbReference>
<keyword id="KW-0025">Alternative splicing</keyword>
<keyword id="KW-0106">Calcium</keyword>
<keyword id="KW-0130">Cell adhesion</keyword>
<keyword id="KW-1003">Cell membrane</keyword>
<keyword id="KW-0903">Direct protein sequencing</keyword>
<keyword id="KW-1015">Disulfide bond</keyword>
<keyword id="KW-0325">Glycoprotein</keyword>
<keyword id="KW-0401">Integrin</keyword>
<keyword id="KW-0460">Magnesium</keyword>
<keyword id="KW-0472">Membrane</keyword>
<keyword id="KW-0479">Metal-binding</keyword>
<keyword id="KW-0581">Phagocytosis</keyword>
<keyword id="KW-0597">Phosphoprotein</keyword>
<keyword id="KW-0675">Receptor</keyword>
<keyword id="KW-1185">Reference proteome</keyword>
<keyword id="KW-0677">Repeat</keyword>
<keyword id="KW-0732">Signal</keyword>
<keyword id="KW-0812">Transmembrane</keyword>
<keyword id="KW-1133">Transmembrane helix</keyword>
<sequence length="1162" mass="128314">MSFRIAGPRLLLLGLQLFAKAWSYNLDTRPTQSFLAQAGRHFGYQVLQIEDGVVVGAPGEGDNTGGLYHCRTSSEFCQPVSLHGSNHTSKYLGMTLATDAAKGSLLACDPGLSRTCDQNTYLSGLCYLFPQSLEGPMLQNRPAYQECMKGKVDLVFLFDGSQSLDRKDFEKILEFMKDVMRKLSNTSYQFAAVQFSTDCRTEFTFLDYVKQNKNPDVLLGSVQPMFLLTNTFRAINYVVAHVFKEESGARPDATKVLVIITDGEASDKGNISAAHDITRYIIGIGKHFVSVQKQKTLHIFASEPVEEFVKILDTFEKLKDLFTDLQRRIYAIEGTNRQDLTSFNMELSSSGISADLSKGHAVVGAVGAKDWAGGFLDLREDLQGATFVGQEPLTSDVRGGYLGYTVAWMTSRSSRPLLAAGAPRYQHVGQVLLFQAPEAGGRWNQTQKIEGTQIGSYFGGELCSVDLDQDGEAELLLIGAPLFFGEQRGGRVFTYQRRQSLFEMVSELQGDPGYPLGRFGAAITALTDINGDRLTDVAVGAPLEEQGAVYIFNGKPGGLSPQPSQRIQGAQVFPGIRWFGRSIHGVKDLGGDRLADVVVGAEGRVVVLSSRPVVDVVTELSFSPEEIPVHEVECSYSAREEQKHGVKLKACFRIKPLTPQFQGRLLANLSYTLQLDGHRMRSRGLFPDGSHELSGNTSITPDKSCLDFHFHFPICIQDLISPINVSLNFSLLEEEGTPRDQKVGRAMQPILRPSIHTVTKEIPFEKNCGEDKKCEANLTLSSPARSGPLRLMSSASLAVEWTLSNSGEDAYWVRLDLDFPRGLSFRKVEMLQPHSRMPVSCEELTEGSSLLTKTLKCNVSSPIFKAGQEVSLQVMFNTLLNSSWEDFVELNGTVHCENENSSLQEDNSAATHIPVLYPVNILTKEQENSTLYISFTPKGPKTQQVQHVYQVRIQPSAYDHNMPTLEALVGVPWPHSEDPITYTWSVQTDPLVTCHSEDLKRPSSEAEQPCLPGVQFRCPIVFRREILIQVTGTVELSKEIKASSTLSLCSSLSVSFNSSKHFHLYGSKASEAQVLVKVDLIHEKEMLHVYVLSGIGGLVLLFLIFLALYKVGFFKRNLKEKMEADGGVPNGSPPEDTDPLAVPGEETKDMGCLEPLRESDKD</sequence>
<protein>
    <recommendedName>
        <fullName evidence="14">Integrin alpha-L</fullName>
    </recommendedName>
    <alternativeName>
        <fullName>CD11 antigen-like family member A</fullName>
    </alternativeName>
    <alternativeName>
        <fullName>Leukocyte adhesion glycoprotein LFA-1 alpha chain</fullName>
        <shortName>LFA-1A</shortName>
    </alternativeName>
    <alternativeName>
        <fullName>Leukocyte function-associated molecule 1 alpha chain</fullName>
    </alternativeName>
    <alternativeName>
        <fullName>Lymphocyte antigen 15</fullName>
        <shortName>Ly-15</shortName>
    </alternativeName>
    <cdAntigenName>CD11a</cdAntigenName>
</protein>